<organism>
    <name type="scientific">Bacillus spizizenii (strain ATCC 23059 / NRRL B-14472 / W23)</name>
    <name type="common">Bacillus subtilis subsp. spizizenii</name>
    <dbReference type="NCBI Taxonomy" id="655816"/>
    <lineage>
        <taxon>Bacteria</taxon>
        <taxon>Bacillati</taxon>
        <taxon>Bacillota</taxon>
        <taxon>Bacilli</taxon>
        <taxon>Bacillales</taxon>
        <taxon>Bacillaceae</taxon>
        <taxon>Bacillus</taxon>
    </lineage>
</organism>
<protein>
    <recommendedName>
        <fullName evidence="1 3">Ribulose-5-phosphate reductase</fullName>
        <shortName evidence="1 3">Ribulose-5-P reductase</shortName>
        <ecNumber evidence="1">1.1.1.405</ecNumber>
    </recommendedName>
    <alternativeName>
        <fullName evidence="1 3">Ribitol-5-phosphate dehydrogenase</fullName>
    </alternativeName>
</protein>
<evidence type="ECO:0000255" key="1">
    <source>
        <dbReference type="HAMAP-Rule" id="MF_02069"/>
    </source>
</evidence>
<evidence type="ECO:0000303" key="2">
    <source>
    </source>
</evidence>
<evidence type="ECO:0000305" key="3"/>
<evidence type="ECO:0000305" key="4">
    <source>
    </source>
</evidence>
<reference key="1">
    <citation type="journal article" date="2002" name="Microbiology">
        <title>Comparison of ribitol and glycerol teichoic acid genes in Bacillus subtilis W23 and 168: identical function, similar divergent organization, but different regulation.</title>
        <authorList>
            <person name="Lazarevic V."/>
            <person name="Abellan F.-X."/>
            <person name="Beggah Moeller S."/>
            <person name="Karamata D."/>
            <person name="Maueel C."/>
        </authorList>
    </citation>
    <scope>NUCLEOTIDE SEQUENCE [GENOMIC DNA]</scope>
    <scope>PUTATIVE FUNCTION</scope>
    <source>
        <strain>ATCC 23059 / NRRL B-14472 / W23</strain>
    </source>
</reference>
<reference key="2">
    <citation type="submission" date="2006-04" db="EMBL/GenBank/DDBJ databases">
        <title>Minor teichoic acid of Bacillus subtilis W23.</title>
        <authorList>
            <person name="Soldo B."/>
            <person name="Freymond P.P."/>
            <person name="Karamata D."/>
            <person name="Lazarevic V."/>
        </authorList>
    </citation>
    <scope>NUCLEOTIDE SEQUENCE [GENOMIC DNA]</scope>
    <source>
        <strain>ATCC 23059 / NRRL B-14472 / W23</strain>
    </source>
</reference>
<reference key="3">
    <citation type="journal article" date="2011" name="Microbiology">
        <title>The genome sequence of Bacillus subtilis subsp. spizizenii W23: insights into speciation within the B. subtilis complex and into the history of B. subtilis genetics.</title>
        <authorList>
            <person name="Zeigler D.R."/>
        </authorList>
    </citation>
    <scope>NUCLEOTIDE SEQUENCE [LARGE SCALE GENOMIC DNA]</scope>
    <source>
        <strain>ATCC 23059 / NRRL B-14472 / W23</strain>
    </source>
</reference>
<name>TARJ_BACSH</name>
<comment type="function">
    <text evidence="1">Catalyzes the NADPH dependent reduction of D-ribulose 5-phosphate to D-ribitol 5-phosphate.</text>
</comment>
<comment type="catalytic activity">
    <reaction evidence="1">
        <text>D-ribitol 5-phosphate + NADP(+) = D-ribulose 5-phosphate + NADPH + H(+)</text>
        <dbReference type="Rhea" id="RHEA:19921"/>
        <dbReference type="ChEBI" id="CHEBI:15378"/>
        <dbReference type="ChEBI" id="CHEBI:57695"/>
        <dbReference type="ChEBI" id="CHEBI:57783"/>
        <dbReference type="ChEBI" id="CHEBI:58121"/>
        <dbReference type="ChEBI" id="CHEBI:58349"/>
        <dbReference type="EC" id="1.1.1.405"/>
    </reaction>
</comment>
<comment type="cofactor">
    <cofactor evidence="1">
        <name>Zn(2+)</name>
        <dbReference type="ChEBI" id="CHEBI:29105"/>
    </cofactor>
</comment>
<comment type="pathway">
    <text evidence="1 4">Cell wall biogenesis; poly(ribitol phosphate) teichoic acid biosynthesis.</text>
</comment>
<comment type="similarity">
    <text evidence="1">Belongs to the zinc-containing alcohol dehydrogenase family.</text>
</comment>
<feature type="chain" id="PRO_0000160829" description="Ribulose-5-phosphate reductase">
    <location>
        <begin position="1"/>
        <end position="341"/>
    </location>
</feature>
<feature type="binding site" evidence="1">
    <location>
        <position position="38"/>
    </location>
    <ligand>
        <name>Zn(2+)</name>
        <dbReference type="ChEBI" id="CHEBI:29105"/>
        <note>catalytic</note>
    </ligand>
</feature>
<feature type="binding site" evidence="1">
    <location>
        <position position="64"/>
    </location>
    <ligand>
        <name>Zn(2+)</name>
        <dbReference type="ChEBI" id="CHEBI:29105"/>
        <note>catalytic</note>
    </ligand>
</feature>
<feature type="binding site" evidence="1">
    <location>
        <position position="65"/>
    </location>
    <ligand>
        <name>Zn(2+)</name>
        <dbReference type="ChEBI" id="CHEBI:29105"/>
        <note>catalytic</note>
    </ligand>
</feature>
<feature type="binding site" evidence="1">
    <location>
        <position position="144"/>
    </location>
    <ligand>
        <name>Zn(2+)</name>
        <dbReference type="ChEBI" id="CHEBI:29105"/>
        <note>catalytic</note>
    </ligand>
</feature>
<accession>Q8RKJ0</accession>
<accession>B7ZDK6</accession>
<accession>E0U4X8</accession>
<dbReference type="EC" id="1.1.1.405" evidence="1"/>
<dbReference type="EMBL" id="AJ313428">
    <property type="protein sequence ID" value="CAC86108.1"/>
    <property type="molecule type" value="Genomic_DNA"/>
</dbReference>
<dbReference type="EMBL" id="AM260209">
    <property type="protein sequence ID" value="CAJ97395.1"/>
    <property type="molecule type" value="Genomic_DNA"/>
</dbReference>
<dbReference type="EMBL" id="CP002183">
    <property type="protein sequence ID" value="ADM39549.1"/>
    <property type="molecule type" value="Genomic_DNA"/>
</dbReference>
<dbReference type="RefSeq" id="WP_003219623.1">
    <property type="nucleotide sequence ID" value="NZ_CP148102.1"/>
</dbReference>
<dbReference type="SMR" id="Q8RKJ0"/>
<dbReference type="KEGG" id="bss:BSUW23_17570"/>
<dbReference type="HOGENOM" id="CLU_823603_0_0_9"/>
<dbReference type="BioCyc" id="MetaCyc:MONOMER-19970"/>
<dbReference type="UniPathway" id="UPA00790"/>
<dbReference type="Proteomes" id="UP000002233">
    <property type="component" value="Chromosome"/>
</dbReference>
<dbReference type="GO" id="GO:0050256">
    <property type="term" value="F:ribitol-5-phosphate 2-dehydrogenase [(NAD(P)+] activity"/>
    <property type="evidence" value="ECO:0007669"/>
    <property type="project" value="UniProtKB-UniRule"/>
</dbReference>
<dbReference type="GO" id="GO:0008270">
    <property type="term" value="F:zinc ion binding"/>
    <property type="evidence" value="ECO:0007669"/>
    <property type="project" value="UniProtKB-UniRule"/>
</dbReference>
<dbReference type="GO" id="GO:0071555">
    <property type="term" value="P:cell wall organization"/>
    <property type="evidence" value="ECO:0007669"/>
    <property type="project" value="UniProtKB-KW"/>
</dbReference>
<dbReference type="GO" id="GO:1902012">
    <property type="term" value="P:poly(ribitol phosphate) teichoic acid biosynthetic process"/>
    <property type="evidence" value="ECO:0007669"/>
    <property type="project" value="UniProtKB-UniRule"/>
</dbReference>
<dbReference type="CDD" id="cd08237">
    <property type="entry name" value="ribitol-5-phosphate_DH"/>
    <property type="match status" value="1"/>
</dbReference>
<dbReference type="Gene3D" id="3.90.180.10">
    <property type="entry name" value="Medium-chain alcohol dehydrogenases, catalytic domain"/>
    <property type="match status" value="1"/>
</dbReference>
<dbReference type="Gene3D" id="3.40.50.720">
    <property type="entry name" value="NAD(P)-binding Rossmann-like Domain"/>
    <property type="match status" value="1"/>
</dbReference>
<dbReference type="HAMAP" id="MF_02069">
    <property type="entry name" value="TarJ"/>
    <property type="match status" value="1"/>
</dbReference>
<dbReference type="InterPro" id="IPR013154">
    <property type="entry name" value="ADH-like_N"/>
</dbReference>
<dbReference type="InterPro" id="IPR031640">
    <property type="entry name" value="Glu_dehyd_C"/>
</dbReference>
<dbReference type="InterPro" id="IPR011032">
    <property type="entry name" value="GroES-like_sf"/>
</dbReference>
<dbReference type="InterPro" id="IPR036291">
    <property type="entry name" value="NAD(P)-bd_dom_sf"/>
</dbReference>
<dbReference type="InterPro" id="IPR034710">
    <property type="entry name" value="TarJ"/>
</dbReference>
<dbReference type="PANTHER" id="PTHR43350:SF19">
    <property type="entry name" value="D-GULOSIDE 3-DEHYDROGENASE"/>
    <property type="match status" value="1"/>
</dbReference>
<dbReference type="PANTHER" id="PTHR43350">
    <property type="entry name" value="NAD-DEPENDENT ALCOHOL DEHYDROGENASE"/>
    <property type="match status" value="1"/>
</dbReference>
<dbReference type="Pfam" id="PF08240">
    <property type="entry name" value="ADH_N"/>
    <property type="match status" value="1"/>
</dbReference>
<dbReference type="Pfam" id="PF16912">
    <property type="entry name" value="Glu_dehyd_C"/>
    <property type="match status" value="1"/>
</dbReference>
<dbReference type="SUPFAM" id="SSF50129">
    <property type="entry name" value="GroES-like"/>
    <property type="match status" value="1"/>
</dbReference>
<dbReference type="SUPFAM" id="SSF51735">
    <property type="entry name" value="NAD(P)-binding Rossmann-fold domains"/>
    <property type="match status" value="1"/>
</dbReference>
<proteinExistence type="inferred from homology"/>
<gene>
    <name evidence="1 2" type="primary">tarJ</name>
    <name type="ordered locus">BSUW23_17570</name>
</gene>
<sequence length="341" mass="38559">MINQTYRLVSARQFEVTYKDKVVHSDKVVVRPTHLSICAADQRYYTGSRGKEAMDKKLPMALIHEGIGKVMFDPTGTFKVGTRVVMVPNTPVEEHEVIAENYLRSSRFRSSGYDGFMQDYMFMAPDRLVELPDSINPHVAAFTELITIAVHALSRFERMAHKKRDTFGVWGDGNLGFIMTLLLKKKYPDSKVFIFGKTPYKLDHFSFVDAAYQINDIPEDVRLDHAFECVGGRGSESAIEQIIAHVHPEACVALLGVSEYPVEIETRMVLEKGITLIGSSRSGREDFARTVDFLAQYPEVVDYLETLVGGRFPVRSIEEITNAFEADLTSSWGKTVIEWEI</sequence>
<keyword id="KW-0961">Cell wall biogenesis/degradation</keyword>
<keyword id="KW-0479">Metal-binding</keyword>
<keyword id="KW-0521">NADP</keyword>
<keyword id="KW-0560">Oxidoreductase</keyword>
<keyword id="KW-0777">Teichoic acid biosynthesis</keyword>
<keyword id="KW-0862">Zinc</keyword>